<accession>A0KKS9</accession>
<comment type="function">
    <text evidence="1">Acts as a ribosome collision sensor. Detects stalled/collided disomes (pairs of ribosomes where the leading ribosome is stalled and a second ribosome has collided with it) and endonucleolytically cleaves mRNA at the 5' boundary of the stalled ribosome. Stalled/collided disomes form a new interface (primarily via the 30S subunits) that binds SmrB. Cleaved mRNA becomes available for tmRNA ligation, leading to ribosomal subunit dissociation and rescue of stalled ribosomes.</text>
</comment>
<comment type="subunit">
    <text evidence="1">Associates with collided ribosomes, but not with correctly translating polysomes.</text>
</comment>
<comment type="similarity">
    <text evidence="1">Belongs to the SmrB family.</text>
</comment>
<name>SMRB_AERHH</name>
<evidence type="ECO:0000255" key="1">
    <source>
        <dbReference type="HAMAP-Rule" id="MF_01042"/>
    </source>
</evidence>
<keyword id="KW-0255">Endonuclease</keyword>
<keyword id="KW-0378">Hydrolase</keyword>
<keyword id="KW-0540">Nuclease</keyword>
<keyword id="KW-1185">Reference proteome</keyword>
<keyword id="KW-0694">RNA-binding</keyword>
<keyword id="KW-0699">rRNA-binding</keyword>
<proteinExistence type="inferred from homology"/>
<feature type="chain" id="PRO_1000084344" description="Ribosome rescue factor SmrB">
    <location>
        <begin position="1"/>
        <end position="174"/>
    </location>
</feature>
<feature type="domain" description="Smr" evidence="1">
    <location>
        <begin position="96"/>
        <end position="171"/>
    </location>
</feature>
<protein>
    <recommendedName>
        <fullName evidence="1">Ribosome rescue factor SmrB</fullName>
        <ecNumber evidence="1">3.1.-.-</ecNumber>
    </recommendedName>
</protein>
<sequence length="174" mass="20157">MKKTPSPTDEETQLFRDAIKGTRKIKQDTIRADLRPVKQKRELRESREKLGVDHYFSDEYQPHLEADGPTRYVREDVSKFELKKLKRGSYPPEIYLDLHGMNQQQAKQELAALLTLCQKENIHVASVMHGIGKHILKQRIPSWLAQHPNVQAFHQAPREWGGDSAILVLLDIEE</sequence>
<organism>
    <name type="scientific">Aeromonas hydrophila subsp. hydrophila (strain ATCC 7966 / DSM 30187 / BCRC 13018 / CCUG 14551 / JCM 1027 / KCTC 2358 / NCIMB 9240 / NCTC 8049)</name>
    <dbReference type="NCBI Taxonomy" id="380703"/>
    <lineage>
        <taxon>Bacteria</taxon>
        <taxon>Pseudomonadati</taxon>
        <taxon>Pseudomonadota</taxon>
        <taxon>Gammaproteobacteria</taxon>
        <taxon>Aeromonadales</taxon>
        <taxon>Aeromonadaceae</taxon>
        <taxon>Aeromonas</taxon>
    </lineage>
</organism>
<reference key="1">
    <citation type="journal article" date="2006" name="J. Bacteriol.">
        <title>Genome sequence of Aeromonas hydrophila ATCC 7966T: jack of all trades.</title>
        <authorList>
            <person name="Seshadri R."/>
            <person name="Joseph S.W."/>
            <person name="Chopra A.K."/>
            <person name="Sha J."/>
            <person name="Shaw J."/>
            <person name="Graf J."/>
            <person name="Haft D.H."/>
            <person name="Wu M."/>
            <person name="Ren Q."/>
            <person name="Rosovitz M.J."/>
            <person name="Madupu R."/>
            <person name="Tallon L."/>
            <person name="Kim M."/>
            <person name="Jin S."/>
            <person name="Vuong H."/>
            <person name="Stine O.C."/>
            <person name="Ali A."/>
            <person name="Horneman A.J."/>
            <person name="Heidelberg J.F."/>
        </authorList>
    </citation>
    <scope>NUCLEOTIDE SEQUENCE [LARGE SCALE GENOMIC DNA]</scope>
    <source>
        <strain>ATCC 7966 / DSM 30187 / BCRC 13018 / CCUG 14551 / JCM 1027 / KCTC 2358 / NCIMB 9240 / NCTC 8049</strain>
    </source>
</reference>
<gene>
    <name evidence="1" type="primary">smrB</name>
    <name type="ordered locus">AHA_2357</name>
</gene>
<dbReference type="EC" id="3.1.-.-" evidence="1"/>
<dbReference type="EMBL" id="CP000462">
    <property type="protein sequence ID" value="ABK35882.1"/>
    <property type="molecule type" value="Genomic_DNA"/>
</dbReference>
<dbReference type="RefSeq" id="WP_011706199.1">
    <property type="nucleotide sequence ID" value="NC_008570.1"/>
</dbReference>
<dbReference type="RefSeq" id="YP_856880.1">
    <property type="nucleotide sequence ID" value="NC_008570.1"/>
</dbReference>
<dbReference type="SMR" id="A0KKS9"/>
<dbReference type="STRING" id="380703.AHA_2357"/>
<dbReference type="EnsemblBacteria" id="ABK35882">
    <property type="protein sequence ID" value="ABK35882"/>
    <property type="gene ID" value="AHA_2357"/>
</dbReference>
<dbReference type="GeneID" id="4489379"/>
<dbReference type="KEGG" id="aha:AHA_2357"/>
<dbReference type="PATRIC" id="fig|380703.7.peg.2359"/>
<dbReference type="eggNOG" id="COG2840">
    <property type="taxonomic scope" value="Bacteria"/>
</dbReference>
<dbReference type="HOGENOM" id="CLU_055978_4_0_6"/>
<dbReference type="OrthoDB" id="5795446at2"/>
<dbReference type="Proteomes" id="UP000000756">
    <property type="component" value="Chromosome"/>
</dbReference>
<dbReference type="GO" id="GO:0004521">
    <property type="term" value="F:RNA endonuclease activity"/>
    <property type="evidence" value="ECO:0007669"/>
    <property type="project" value="UniProtKB-UniRule"/>
</dbReference>
<dbReference type="GO" id="GO:0019843">
    <property type="term" value="F:rRNA binding"/>
    <property type="evidence" value="ECO:0007669"/>
    <property type="project" value="UniProtKB-UniRule"/>
</dbReference>
<dbReference type="GO" id="GO:0072344">
    <property type="term" value="P:rescue of stalled ribosome"/>
    <property type="evidence" value="ECO:0007669"/>
    <property type="project" value="UniProtKB-UniRule"/>
</dbReference>
<dbReference type="Gene3D" id="3.30.1370.110">
    <property type="match status" value="1"/>
</dbReference>
<dbReference type="HAMAP" id="MF_01042">
    <property type="entry name" value="SmrB"/>
    <property type="match status" value="1"/>
</dbReference>
<dbReference type="InterPro" id="IPR002625">
    <property type="entry name" value="Smr_dom"/>
</dbReference>
<dbReference type="InterPro" id="IPR036063">
    <property type="entry name" value="Smr_dom_sf"/>
</dbReference>
<dbReference type="InterPro" id="IPR022990">
    <property type="entry name" value="SmrB-like"/>
</dbReference>
<dbReference type="NCBIfam" id="NF003432">
    <property type="entry name" value="PRK04946.1"/>
    <property type="match status" value="1"/>
</dbReference>
<dbReference type="PANTHER" id="PTHR35562">
    <property type="entry name" value="DNA ENDONUCLEASE SMRA-RELATED"/>
    <property type="match status" value="1"/>
</dbReference>
<dbReference type="PANTHER" id="PTHR35562:SF1">
    <property type="entry name" value="UPF0115 PROTEIN YFCN"/>
    <property type="match status" value="1"/>
</dbReference>
<dbReference type="Pfam" id="PF01713">
    <property type="entry name" value="Smr"/>
    <property type="match status" value="1"/>
</dbReference>
<dbReference type="SMART" id="SM00463">
    <property type="entry name" value="SMR"/>
    <property type="match status" value="1"/>
</dbReference>
<dbReference type="SUPFAM" id="SSF160443">
    <property type="entry name" value="SMR domain-like"/>
    <property type="match status" value="1"/>
</dbReference>
<dbReference type="PROSITE" id="PS50828">
    <property type="entry name" value="SMR"/>
    <property type="match status" value="1"/>
</dbReference>